<name>TMA7_CAEBR</name>
<comment type="similarity">
    <text evidence="3">Belongs to the TMA7 family.</text>
</comment>
<organism>
    <name type="scientific">Caenorhabditis briggsae</name>
    <dbReference type="NCBI Taxonomy" id="6238"/>
    <lineage>
        <taxon>Eukaryota</taxon>
        <taxon>Metazoa</taxon>
        <taxon>Ecdysozoa</taxon>
        <taxon>Nematoda</taxon>
        <taxon>Chromadorea</taxon>
        <taxon>Rhabditida</taxon>
        <taxon>Rhabditina</taxon>
        <taxon>Rhabditomorpha</taxon>
        <taxon>Rhabditoidea</taxon>
        <taxon>Rhabditidae</taxon>
        <taxon>Peloderinae</taxon>
        <taxon>Caenorhabditis</taxon>
    </lineage>
</organism>
<feature type="chain" id="PRO_0000248077" description="Translation machinery-associated protein 7 homolog">
    <location>
        <begin position="1"/>
        <end position="64"/>
    </location>
</feature>
<feature type="region of interest" description="Disordered" evidence="2">
    <location>
        <begin position="1"/>
        <end position="64"/>
    </location>
</feature>
<feature type="coiled-coil region" evidence="1">
    <location>
        <begin position="21"/>
        <end position="50"/>
    </location>
</feature>
<feature type="compositionally biased region" description="Basic and acidic residues" evidence="2">
    <location>
        <begin position="28"/>
        <end position="44"/>
    </location>
</feature>
<feature type="compositionally biased region" description="Gly residues" evidence="2">
    <location>
        <begin position="53"/>
        <end position="64"/>
    </location>
</feature>
<gene>
    <name type="ORF">CBG21705</name>
</gene>
<dbReference type="EMBL" id="HE600966">
    <property type="protein sequence ID" value="CAP38463.1"/>
    <property type="molecule type" value="Genomic_DNA"/>
</dbReference>
<dbReference type="RefSeq" id="XP_002632949.1">
    <property type="nucleotide sequence ID" value="XM_002632903.1"/>
</dbReference>
<dbReference type="FunCoup" id="Q60QR6">
    <property type="interactions" value="1133"/>
</dbReference>
<dbReference type="STRING" id="6238.Q60QR6"/>
<dbReference type="EnsemblMetazoa" id="CBG21705a.1">
    <property type="protein sequence ID" value="CBG21705a.1"/>
    <property type="gene ID" value="WBGene00040407"/>
</dbReference>
<dbReference type="EnsemblMetazoa" id="CBG21705a.2">
    <property type="protein sequence ID" value="CBG21705a.2"/>
    <property type="gene ID" value="WBGene00040407"/>
</dbReference>
<dbReference type="GeneID" id="8574944"/>
<dbReference type="KEGG" id="cbr:CBG_21705"/>
<dbReference type="CTD" id="8574944"/>
<dbReference type="WormBase" id="CBG21705a">
    <property type="protein sequence ID" value="CBP05153"/>
    <property type="gene ID" value="WBGene00040407"/>
</dbReference>
<dbReference type="eggNOG" id="KOG4766">
    <property type="taxonomic scope" value="Eukaryota"/>
</dbReference>
<dbReference type="HOGENOM" id="CLU_184661_2_0_1"/>
<dbReference type="InParanoid" id="Q60QR6"/>
<dbReference type="OMA" id="KKGPMNT"/>
<dbReference type="Proteomes" id="UP000008549">
    <property type="component" value="Unassembled WGS sequence"/>
</dbReference>
<dbReference type="InterPro" id="IPR015157">
    <property type="entry name" value="TMA7"/>
</dbReference>
<dbReference type="PANTHER" id="PTHR28632">
    <property type="entry name" value="TRANSLATION MACHINERY-ASSOCIATED PROTEIN 7"/>
    <property type="match status" value="1"/>
</dbReference>
<dbReference type="Pfam" id="PF09072">
    <property type="entry name" value="TMA7"/>
    <property type="match status" value="1"/>
</dbReference>
<evidence type="ECO:0000255" key="1"/>
<evidence type="ECO:0000256" key="2">
    <source>
        <dbReference type="SAM" id="MobiDB-lite"/>
    </source>
</evidence>
<evidence type="ECO:0000305" key="3"/>
<keyword id="KW-0175">Coiled coil</keyword>
<keyword id="KW-1185">Reference proteome</keyword>
<sequence length="64" mass="6893">MSGRQGGKAKPLKAPKKGEKDLSEEDVEFKKKQQEEAKKIKEMAAKAGQRGPLLGGGIKKSGKK</sequence>
<accession>Q60QR6</accession>
<accession>A8Y0P3</accession>
<reference key="1">
    <citation type="journal article" date="2003" name="PLoS Biol.">
        <title>The genome sequence of Caenorhabditis briggsae: a platform for comparative genomics.</title>
        <authorList>
            <person name="Stein L.D."/>
            <person name="Bao Z."/>
            <person name="Blasiar D."/>
            <person name="Blumenthal T."/>
            <person name="Brent M.R."/>
            <person name="Chen N."/>
            <person name="Chinwalla A."/>
            <person name="Clarke L."/>
            <person name="Clee C."/>
            <person name="Coghlan A."/>
            <person name="Coulson A."/>
            <person name="D'Eustachio P."/>
            <person name="Fitch D.H.A."/>
            <person name="Fulton L.A."/>
            <person name="Fulton R.E."/>
            <person name="Griffiths-Jones S."/>
            <person name="Harris T.W."/>
            <person name="Hillier L.W."/>
            <person name="Kamath R."/>
            <person name="Kuwabara P.E."/>
            <person name="Mardis E.R."/>
            <person name="Marra M.A."/>
            <person name="Miner T.L."/>
            <person name="Minx P."/>
            <person name="Mullikin J.C."/>
            <person name="Plumb R.W."/>
            <person name="Rogers J."/>
            <person name="Schein J.E."/>
            <person name="Sohrmann M."/>
            <person name="Spieth J."/>
            <person name="Stajich J.E."/>
            <person name="Wei C."/>
            <person name="Willey D."/>
            <person name="Wilson R.K."/>
            <person name="Durbin R.M."/>
            <person name="Waterston R.H."/>
        </authorList>
    </citation>
    <scope>NUCLEOTIDE SEQUENCE [LARGE SCALE GENOMIC DNA]</scope>
    <source>
        <strain>AF16</strain>
    </source>
</reference>
<proteinExistence type="inferred from homology"/>
<protein>
    <recommendedName>
        <fullName>Translation machinery-associated protein 7 homolog</fullName>
    </recommendedName>
    <alternativeName>
        <fullName>Coiled-coil domain-containing protein 72 homolog</fullName>
    </alternativeName>
</protein>